<dbReference type="EC" id="3.4.24.-"/>
<dbReference type="EMBL" id="AL123456">
    <property type="protein sequence ID" value="CCP45581.1"/>
    <property type="molecule type" value="Genomic_DNA"/>
</dbReference>
<dbReference type="PIR" id="E70883">
    <property type="entry name" value="E70883"/>
</dbReference>
<dbReference type="RefSeq" id="WP_003414119.1">
    <property type="nucleotide sequence ID" value="NZ_NVQJ01000020.1"/>
</dbReference>
<dbReference type="SMR" id="P9WHT5"/>
<dbReference type="FunCoup" id="P9WHT5">
    <property type="interactions" value="497"/>
</dbReference>
<dbReference type="STRING" id="83332.Rv2782c"/>
<dbReference type="PaxDb" id="83332-Rv2782c"/>
<dbReference type="DNASU" id="888470"/>
<dbReference type="KEGG" id="mtu:Rv2782c"/>
<dbReference type="KEGG" id="mtv:RVBD_2782c"/>
<dbReference type="TubercuList" id="Rv2782c"/>
<dbReference type="eggNOG" id="COG0612">
    <property type="taxonomic scope" value="Bacteria"/>
</dbReference>
<dbReference type="InParanoid" id="P9WHT5"/>
<dbReference type="OrthoDB" id="9811314at2"/>
<dbReference type="PhylomeDB" id="P9WHT5"/>
<dbReference type="Proteomes" id="UP000001584">
    <property type="component" value="Chromosome"/>
</dbReference>
<dbReference type="GO" id="GO:0005886">
    <property type="term" value="C:plasma membrane"/>
    <property type="evidence" value="ECO:0007005"/>
    <property type="project" value="MTBBASE"/>
</dbReference>
<dbReference type="GO" id="GO:0046872">
    <property type="term" value="F:metal ion binding"/>
    <property type="evidence" value="ECO:0007669"/>
    <property type="project" value="UniProtKB-KW"/>
</dbReference>
<dbReference type="GO" id="GO:0004222">
    <property type="term" value="F:metalloendopeptidase activity"/>
    <property type="evidence" value="ECO:0007669"/>
    <property type="project" value="InterPro"/>
</dbReference>
<dbReference type="GO" id="GO:0006508">
    <property type="term" value="P:proteolysis"/>
    <property type="evidence" value="ECO:0007669"/>
    <property type="project" value="UniProtKB-KW"/>
</dbReference>
<dbReference type="FunFam" id="3.30.830.10:FF:000008">
    <property type="entry name" value="Mitochondrial-processing peptidase subunit beta"/>
    <property type="match status" value="1"/>
</dbReference>
<dbReference type="FunFam" id="3.30.830.10:FF:000063">
    <property type="entry name" value="Zinc protease"/>
    <property type="match status" value="1"/>
</dbReference>
<dbReference type="Gene3D" id="3.30.830.10">
    <property type="entry name" value="Metalloenzyme, LuxS/M16 peptidase-like"/>
    <property type="match status" value="2"/>
</dbReference>
<dbReference type="InterPro" id="IPR011249">
    <property type="entry name" value="Metalloenz_LuxS/M16"/>
</dbReference>
<dbReference type="InterPro" id="IPR050361">
    <property type="entry name" value="MPP/UQCRC_Complex"/>
</dbReference>
<dbReference type="InterPro" id="IPR011765">
    <property type="entry name" value="Pept_M16_N"/>
</dbReference>
<dbReference type="InterPro" id="IPR001431">
    <property type="entry name" value="Pept_M16_Zn_BS"/>
</dbReference>
<dbReference type="InterPro" id="IPR007863">
    <property type="entry name" value="Peptidase_M16_C"/>
</dbReference>
<dbReference type="PANTHER" id="PTHR11851">
    <property type="entry name" value="METALLOPROTEASE"/>
    <property type="match status" value="1"/>
</dbReference>
<dbReference type="PANTHER" id="PTHR11851:SF49">
    <property type="entry name" value="MITOCHONDRIAL-PROCESSING PEPTIDASE SUBUNIT ALPHA"/>
    <property type="match status" value="1"/>
</dbReference>
<dbReference type="Pfam" id="PF00675">
    <property type="entry name" value="Peptidase_M16"/>
    <property type="match status" value="1"/>
</dbReference>
<dbReference type="Pfam" id="PF05193">
    <property type="entry name" value="Peptidase_M16_C"/>
    <property type="match status" value="1"/>
</dbReference>
<dbReference type="SUPFAM" id="SSF63411">
    <property type="entry name" value="LuxS/MPP-like metallohydrolase"/>
    <property type="match status" value="2"/>
</dbReference>
<dbReference type="PROSITE" id="PS00143">
    <property type="entry name" value="INSULINASE"/>
    <property type="match status" value="1"/>
</dbReference>
<feature type="chain" id="PRO_0000074423" description="Uncharacterized zinc protease Rv2782c">
    <location>
        <begin position="1"/>
        <end position="438"/>
    </location>
</feature>
<feature type="active site" description="Proton acceptor" evidence="2">
    <location>
        <position position="62"/>
    </location>
</feature>
<feature type="binding site" evidence="2">
    <location>
        <position position="59"/>
    </location>
    <ligand>
        <name>Zn(2+)</name>
        <dbReference type="ChEBI" id="CHEBI:29105"/>
    </ligand>
</feature>
<feature type="binding site" evidence="2">
    <location>
        <position position="63"/>
    </location>
    <ligand>
        <name>Zn(2+)</name>
        <dbReference type="ChEBI" id="CHEBI:29105"/>
    </ligand>
</feature>
<feature type="binding site" evidence="2">
    <location>
        <position position="139"/>
    </location>
    <ligand>
        <name>Zn(2+)</name>
        <dbReference type="ChEBI" id="CHEBI:29105"/>
    </ligand>
</feature>
<reference key="1">
    <citation type="journal article" date="1998" name="Nature">
        <title>Deciphering the biology of Mycobacterium tuberculosis from the complete genome sequence.</title>
        <authorList>
            <person name="Cole S.T."/>
            <person name="Brosch R."/>
            <person name="Parkhill J."/>
            <person name="Garnier T."/>
            <person name="Churcher C.M."/>
            <person name="Harris D.E."/>
            <person name="Gordon S.V."/>
            <person name="Eiglmeier K."/>
            <person name="Gas S."/>
            <person name="Barry C.E. III"/>
            <person name="Tekaia F."/>
            <person name="Badcock K."/>
            <person name="Basham D."/>
            <person name="Brown D."/>
            <person name="Chillingworth T."/>
            <person name="Connor R."/>
            <person name="Davies R.M."/>
            <person name="Devlin K."/>
            <person name="Feltwell T."/>
            <person name="Gentles S."/>
            <person name="Hamlin N."/>
            <person name="Holroyd S."/>
            <person name="Hornsby T."/>
            <person name="Jagels K."/>
            <person name="Krogh A."/>
            <person name="McLean J."/>
            <person name="Moule S."/>
            <person name="Murphy L.D."/>
            <person name="Oliver S."/>
            <person name="Osborne J."/>
            <person name="Quail M.A."/>
            <person name="Rajandream M.A."/>
            <person name="Rogers J."/>
            <person name="Rutter S."/>
            <person name="Seeger K."/>
            <person name="Skelton S."/>
            <person name="Squares S."/>
            <person name="Squares R."/>
            <person name="Sulston J.E."/>
            <person name="Taylor K."/>
            <person name="Whitehead S."/>
            <person name="Barrell B.G."/>
        </authorList>
    </citation>
    <scope>NUCLEOTIDE SEQUENCE [LARGE SCALE GENOMIC DNA]</scope>
    <source>
        <strain>ATCC 25618 / H37Rv</strain>
    </source>
</reference>
<reference key="2">
    <citation type="journal article" date="2011" name="Mol. Cell. Proteomics">
        <title>Proteogenomic analysis of Mycobacterium tuberculosis by high resolution mass spectrometry.</title>
        <authorList>
            <person name="Kelkar D.S."/>
            <person name="Kumar D."/>
            <person name="Kumar P."/>
            <person name="Balakrishnan L."/>
            <person name="Muthusamy B."/>
            <person name="Yadav A.K."/>
            <person name="Shrivastava P."/>
            <person name="Marimuthu A."/>
            <person name="Anand S."/>
            <person name="Sundaram H."/>
            <person name="Kingsbury R."/>
            <person name="Harsha H.C."/>
            <person name="Nair B."/>
            <person name="Prasad T.S."/>
            <person name="Chauhan D.S."/>
            <person name="Katoch K."/>
            <person name="Katoch V.M."/>
            <person name="Kumar P."/>
            <person name="Chaerkady R."/>
            <person name="Ramachandran S."/>
            <person name="Dash D."/>
            <person name="Pandey A."/>
        </authorList>
    </citation>
    <scope>IDENTIFICATION BY MASS SPECTROMETRY [LARGE SCALE ANALYSIS]</scope>
    <source>
        <strain>ATCC 25618 / H37Rv</strain>
    </source>
</reference>
<proteinExistence type="evidence at protein level"/>
<sequence>MPRRSPADPAAALAPRRTTLPGGLRVVTEFLPAVHSASVGVWVGVGSRDEGATVAGAAHFLEHLLFKSTPTRSAVDIAQAMDAVGGELNAFTAKEHTCYYAHVLGSDLPLAVDLVADVVLNGRCAADDVEVERDVVLEEIAMRDDDPEDALADMFLAALFGDHPVGRPVIGSAQSVSVMTRAQLQSFHLRRYTPERMVVAAAGNVDHDGLVALVREHFGSRLVRGRRPVAPRKGTGRVNGSPRLTLVSRDAEQTHVSLGIRTPGRGWEHRWALSVLHTALGGGLSSRLFQEVRETRGLAYSVYSALDLFADSGALSVYAACLPERFADVMRVTADVLESVARDGITEAECGIAKGSLRGGLVLGLEDSSSRMSRLGRSELNYGKHRSIEHTLRQIEQVTVEEVNAVARHLLSRRYGAAVLGPHGSKRSLPQQLRAMVG</sequence>
<comment type="cofactor">
    <cofactor evidence="1">
        <name>Zn(2+)</name>
        <dbReference type="ChEBI" id="CHEBI:29105"/>
    </cofactor>
    <text evidence="1">Binds 1 zinc ion per subunit.</text>
</comment>
<comment type="similarity">
    <text evidence="3">Belongs to the peptidase M16 family.</text>
</comment>
<gene>
    <name type="ordered locus">Rv2782c</name>
    <name type="ORF">MTV002.47c</name>
</gene>
<evidence type="ECO:0000250" key="1"/>
<evidence type="ECO:0000255" key="2">
    <source>
        <dbReference type="PROSITE-ProRule" id="PRU10096"/>
    </source>
</evidence>
<evidence type="ECO:0000305" key="3"/>
<keyword id="KW-0378">Hydrolase</keyword>
<keyword id="KW-0479">Metal-binding</keyword>
<keyword id="KW-0482">Metalloprotease</keyword>
<keyword id="KW-0645">Protease</keyword>
<keyword id="KW-1185">Reference proteome</keyword>
<keyword id="KW-0862">Zinc</keyword>
<protein>
    <recommendedName>
        <fullName>Uncharacterized zinc protease Rv2782c</fullName>
        <ecNumber>3.4.24.-</ecNumber>
    </recommendedName>
</protein>
<accession>P9WHT5</accession>
<accession>L0TAV3</accession>
<accession>O33324</accession>
<accession>P0A5S8</accession>
<name>Y2782_MYCTU</name>
<organism>
    <name type="scientific">Mycobacterium tuberculosis (strain ATCC 25618 / H37Rv)</name>
    <dbReference type="NCBI Taxonomy" id="83332"/>
    <lineage>
        <taxon>Bacteria</taxon>
        <taxon>Bacillati</taxon>
        <taxon>Actinomycetota</taxon>
        <taxon>Actinomycetes</taxon>
        <taxon>Mycobacteriales</taxon>
        <taxon>Mycobacteriaceae</taxon>
        <taxon>Mycobacterium</taxon>
        <taxon>Mycobacterium tuberculosis complex</taxon>
    </lineage>
</organism>